<evidence type="ECO:0000255" key="1">
    <source>
        <dbReference type="PROSITE-ProRule" id="PRU01185"/>
    </source>
</evidence>
<evidence type="ECO:0000256" key="2">
    <source>
        <dbReference type="SAM" id="MobiDB-lite"/>
    </source>
</evidence>
<evidence type="ECO:0000269" key="3">
    <source>
    </source>
</evidence>
<evidence type="ECO:0000305" key="4"/>
<comment type="function">
    <text evidence="3">Essential component of the COP9 signalosome complex (CSN), a complex involved in various cellular and developmental processes. The CSN complex is an essential regulator of the ubiquitin (Ubl) conjugation pathway by mediating the deneddylation of the cullin subunits of the SCF-type E3 ligase complexes, leading to decrease the Ubl ligase activity of SCF. The CSN complex plays an essential role in embryogenesis and oogenesis and is required to regulate microtubule stability in the early embryo. Mediates mei-3/katanin targeting for degradation at the meiosis to mitosis transition via deneddylation of cul-3.</text>
</comment>
<comment type="subunit">
    <text evidence="3">Component of the CSN complex, probably composed of csn-1, csn-2, csn-3, csn-4, csn-5, csn-6 and csn-7. Within the complex it probably interacts directly with csn-1, csn-3 and csn-4.</text>
</comment>
<comment type="interaction">
    <interactant intactId="EBI-331413">
        <id>O01422</id>
    </interactant>
    <interactant intactId="EBI-331408">
        <id>Q9GS00</id>
        <label>csn-1</label>
    </interactant>
    <organismsDiffer>false</organismsDiffer>
    <experiments>4</experiments>
</comment>
<comment type="interaction">
    <interactant intactId="EBI-331413">
        <id>O01422</id>
    </interactant>
    <interactant intactId="EBI-331347">
        <id>Q9N359</id>
        <label>csn-4</label>
    </interactant>
    <organismsDiffer>false</organismsDiffer>
    <experiments>3</experiments>
</comment>
<comment type="subcellular location">
    <subcellularLocation>
        <location evidence="3">Cytoplasm</location>
    </subcellularLocation>
    <subcellularLocation>
        <location evidence="3">Nucleus</location>
    </subcellularLocation>
</comment>
<comment type="similarity">
    <text evidence="4">Belongs to the CSN2 family.</text>
</comment>
<protein>
    <recommendedName>
        <fullName>COP9 signalosome complex subunit 2</fullName>
        <shortName>Signalosome subunit 2</shortName>
    </recommendedName>
</protein>
<accession>O01422</accession>
<feature type="chain" id="PRO_0000120973" description="COP9 signalosome complex subunit 2">
    <location>
        <begin position="1"/>
        <end position="495"/>
    </location>
</feature>
<feature type="domain" description="PCI" evidence="1">
    <location>
        <begin position="254"/>
        <end position="416"/>
    </location>
</feature>
<feature type="region of interest" description="Disordered" evidence="2">
    <location>
        <begin position="1"/>
        <end position="26"/>
    </location>
</feature>
<feature type="region of interest" description="Disordered" evidence="2">
    <location>
        <begin position="426"/>
        <end position="468"/>
    </location>
</feature>
<feature type="compositionally biased region" description="Polar residues" evidence="2">
    <location>
        <begin position="430"/>
        <end position="441"/>
    </location>
</feature>
<feature type="compositionally biased region" description="Low complexity" evidence="2">
    <location>
        <begin position="442"/>
        <end position="455"/>
    </location>
</feature>
<gene>
    <name type="primary">csn-2</name>
    <name type="ORF">B0025.2</name>
</gene>
<reference key="1">
    <citation type="journal article" date="1998" name="Science">
        <title>Genome sequence of the nematode C. elegans: a platform for investigating biology.</title>
        <authorList>
            <consortium name="The C. elegans sequencing consortium"/>
        </authorList>
    </citation>
    <scope>NUCLEOTIDE SEQUENCE [LARGE SCALE GENOMIC DNA]</scope>
    <source>
        <strain>Bristol N2</strain>
    </source>
</reference>
<reference key="2">
    <citation type="journal article" date="2003" name="Curr. Biol.">
        <title>Neddylation and deneddylation of CUL-3 is required to target MEI-1/katanin for degradation at the meiosis-to-mitosis transition in C. elegans.</title>
        <authorList>
            <person name="Pintard L."/>
            <person name="Kurz T."/>
            <person name="Glaser S."/>
            <person name="Willis J.H."/>
            <person name="Peter M."/>
            <person name="Bowerman B."/>
        </authorList>
    </citation>
    <scope>FUNCTION</scope>
    <scope>SUBCELLULAR LOCATION</scope>
    <scope>INTERACTION WITH CSN-1; CSN-3 AND CSN-4</scope>
</reference>
<organism>
    <name type="scientific">Caenorhabditis elegans</name>
    <dbReference type="NCBI Taxonomy" id="6239"/>
    <lineage>
        <taxon>Eukaryota</taxon>
        <taxon>Metazoa</taxon>
        <taxon>Ecdysozoa</taxon>
        <taxon>Nematoda</taxon>
        <taxon>Chromadorea</taxon>
        <taxon>Rhabditida</taxon>
        <taxon>Rhabditina</taxon>
        <taxon>Rhabditomorpha</taxon>
        <taxon>Rhabditoidea</taxon>
        <taxon>Rhabditidae</taxon>
        <taxon>Peloderinae</taxon>
        <taxon>Caenorhabditis</taxon>
    </lineage>
</organism>
<name>CSN2_CAEEL</name>
<sequence length="495" mass="56781">MGDEYMDDDEDYGFEYEDDSGSEPDVDMENQYYTAKGLRSDGKLDEAIKSFEKVLELEGEKGEWGFKALKQMIKITFGQNRLEKMLEYYRQLLTYIKSAVTKNYSEKSINAILDYISTSRQMDLLQHFYETTLDALKDAKNERLWFKTNTKLGKLFFDLHEFTKLEKIVKQLKVSCKNEQGEEDQRKGTQLLEIYALEIQMYTEQKNNKALKWVYELATQAIHTKSAIPHPLILGTIRECGGKMHLRDGRFLDAHTDFFEAFKNYDESGSPRRTTCLKYLVLANMLIKSDINPFDSQEAKPFKNEPEIVAMTQMVQAYQDNDIQAFEQIMAAHQDSIMADPFIREHTEELMNNIRTQVLLRLIRPYTNVRISYLSQKLKVSQKEVIHLLVDAILDDGLEAKINEESGMIEMPKNKKKMMVTSLVVPNAGDQGTTKSDSKPGTSSEPSTTTSVTSSILQGPPATSSCHQELSMDGLRVWAERIDSIQSNIGTRIKF</sequence>
<keyword id="KW-0963">Cytoplasm</keyword>
<keyword id="KW-0217">Developmental protein</keyword>
<keyword id="KW-0221">Differentiation</keyword>
<keyword id="KW-0539">Nucleus</keyword>
<keyword id="KW-0896">Oogenesis</keyword>
<keyword id="KW-1185">Reference proteome</keyword>
<keyword id="KW-0736">Signalosome</keyword>
<proteinExistence type="evidence at protein level"/>
<dbReference type="EMBL" id="FO080100">
    <property type="protein sequence ID" value="CCD61197.1"/>
    <property type="molecule type" value="Genomic_DNA"/>
</dbReference>
<dbReference type="PIR" id="T25440">
    <property type="entry name" value="T25440"/>
</dbReference>
<dbReference type="RefSeq" id="NP_491740.1">
    <property type="nucleotide sequence ID" value="NM_059339.10"/>
</dbReference>
<dbReference type="SMR" id="O01422"/>
<dbReference type="BioGRID" id="37732">
    <property type="interactions" value="18"/>
</dbReference>
<dbReference type="ComplexPortal" id="CPX-3386">
    <property type="entry name" value="COP9 signalosome complex"/>
</dbReference>
<dbReference type="DIP" id="DIP-24665N"/>
<dbReference type="FunCoup" id="O01422">
    <property type="interactions" value="3221"/>
</dbReference>
<dbReference type="IntAct" id="O01422">
    <property type="interactions" value="6"/>
</dbReference>
<dbReference type="STRING" id="6239.B0025.2.1"/>
<dbReference type="PaxDb" id="6239-B0025.2.2"/>
<dbReference type="PeptideAtlas" id="O01422"/>
<dbReference type="EnsemblMetazoa" id="B0025.2.1">
    <property type="protein sequence ID" value="B0025.2.1"/>
    <property type="gene ID" value="WBGene00000814"/>
</dbReference>
<dbReference type="EnsemblMetazoa" id="B0025.2.2">
    <property type="protein sequence ID" value="B0025.2.2"/>
    <property type="gene ID" value="WBGene00000814"/>
</dbReference>
<dbReference type="GeneID" id="172278"/>
<dbReference type="KEGG" id="cel:CELE_B0025.2"/>
<dbReference type="UCSC" id="B0025.2.1">
    <property type="organism name" value="c. elegans"/>
</dbReference>
<dbReference type="AGR" id="WB:WBGene00000814"/>
<dbReference type="CTD" id="172278"/>
<dbReference type="WormBase" id="B0025.2">
    <property type="protein sequence ID" value="CE27562"/>
    <property type="gene ID" value="WBGene00000814"/>
    <property type="gene designation" value="csn-2"/>
</dbReference>
<dbReference type="eggNOG" id="KOG1464">
    <property type="taxonomic scope" value="Eukaryota"/>
</dbReference>
<dbReference type="GeneTree" id="ENSGT00530000063301"/>
<dbReference type="HOGENOM" id="CLU_028981_0_1_1"/>
<dbReference type="InParanoid" id="O01422"/>
<dbReference type="OMA" id="SEENWKD"/>
<dbReference type="OrthoDB" id="194139at2759"/>
<dbReference type="PhylomeDB" id="O01422"/>
<dbReference type="Reactome" id="R-CEL-5696394">
    <property type="pathway name" value="DNA Damage Recognition in GG-NER"/>
</dbReference>
<dbReference type="Reactome" id="R-CEL-6781823">
    <property type="pathway name" value="Formation of TC-NER Pre-Incision Complex"/>
</dbReference>
<dbReference type="Reactome" id="R-CEL-8856825">
    <property type="pathway name" value="Cargo recognition for clathrin-mediated endocytosis"/>
</dbReference>
<dbReference type="Reactome" id="R-CEL-8951664">
    <property type="pathway name" value="Neddylation"/>
</dbReference>
<dbReference type="PRO" id="PR:O01422"/>
<dbReference type="Proteomes" id="UP000001940">
    <property type="component" value="Chromosome I"/>
</dbReference>
<dbReference type="Bgee" id="WBGene00000814">
    <property type="expression patterns" value="Expressed in embryo and 3 other cell types or tissues"/>
</dbReference>
<dbReference type="GO" id="GO:0008180">
    <property type="term" value="C:COP9 signalosome"/>
    <property type="evidence" value="ECO:0000353"/>
    <property type="project" value="ComplexPortal"/>
</dbReference>
<dbReference type="GO" id="GO:0005737">
    <property type="term" value="C:cytoplasm"/>
    <property type="evidence" value="ECO:0000303"/>
    <property type="project" value="ComplexPortal"/>
</dbReference>
<dbReference type="GO" id="GO:0005634">
    <property type="term" value="C:nucleus"/>
    <property type="evidence" value="ECO:0000303"/>
    <property type="project" value="ComplexPortal"/>
</dbReference>
<dbReference type="GO" id="GO:0060184">
    <property type="term" value="P:cell cycle switching"/>
    <property type="evidence" value="ECO:0000315"/>
    <property type="project" value="ComplexPortal"/>
</dbReference>
<dbReference type="GO" id="GO:0048477">
    <property type="term" value="P:oogenesis"/>
    <property type="evidence" value="ECO:0007669"/>
    <property type="project" value="UniProtKB-KW"/>
</dbReference>
<dbReference type="GO" id="GO:0000338">
    <property type="term" value="P:protein deneddylation"/>
    <property type="evidence" value="ECO:0000318"/>
    <property type="project" value="GO_Central"/>
</dbReference>
<dbReference type="GO" id="GO:1905879">
    <property type="term" value="P:regulation of oogenesis"/>
    <property type="evidence" value="ECO:0000315"/>
    <property type="project" value="ComplexPortal"/>
</dbReference>
<dbReference type="FunFam" id="1.25.40.570:FF:000011">
    <property type="entry name" value="COP9 signalosome complex subunit 2"/>
    <property type="match status" value="1"/>
</dbReference>
<dbReference type="Gene3D" id="1.25.40.570">
    <property type="match status" value="1"/>
</dbReference>
<dbReference type="InterPro" id="IPR050871">
    <property type="entry name" value="26S_Proteasome/COP9_Components"/>
</dbReference>
<dbReference type="InterPro" id="IPR000717">
    <property type="entry name" value="PCI_dom"/>
</dbReference>
<dbReference type="InterPro" id="IPR011990">
    <property type="entry name" value="TPR-like_helical_dom_sf"/>
</dbReference>
<dbReference type="InterPro" id="IPR036390">
    <property type="entry name" value="WH_DNA-bd_sf"/>
</dbReference>
<dbReference type="PANTHER" id="PTHR10678">
    <property type="entry name" value="26S PROTEASOME NON-ATPASE REGULATORY SUBUNIT 11/COP9 SIGNALOSOME COMPLEX SUBUNIT 2"/>
    <property type="match status" value="1"/>
</dbReference>
<dbReference type="Pfam" id="PF01399">
    <property type="entry name" value="PCI"/>
    <property type="match status" value="1"/>
</dbReference>
<dbReference type="SMART" id="SM00753">
    <property type="entry name" value="PAM"/>
    <property type="match status" value="1"/>
</dbReference>
<dbReference type="SMART" id="SM00088">
    <property type="entry name" value="PINT"/>
    <property type="match status" value="1"/>
</dbReference>
<dbReference type="SUPFAM" id="SSF48452">
    <property type="entry name" value="TPR-like"/>
    <property type="match status" value="1"/>
</dbReference>
<dbReference type="SUPFAM" id="SSF46785">
    <property type="entry name" value="Winged helix' DNA-binding domain"/>
    <property type="match status" value="1"/>
</dbReference>
<dbReference type="PROSITE" id="PS50250">
    <property type="entry name" value="PCI"/>
    <property type="match status" value="1"/>
</dbReference>